<evidence type="ECO:0000255" key="1">
    <source>
        <dbReference type="HAMAP-Rule" id="MF_00018"/>
    </source>
</evidence>
<evidence type="ECO:0000255" key="2">
    <source>
        <dbReference type="PROSITE-ProRule" id="PRU01182"/>
    </source>
</evidence>
<protein>
    <recommendedName>
        <fullName evidence="1">UPF0758 protein YicR</fullName>
    </recommendedName>
</protein>
<keyword id="KW-0378">Hydrolase</keyword>
<keyword id="KW-0479">Metal-binding</keyword>
<keyword id="KW-0482">Metalloprotease</keyword>
<keyword id="KW-0645">Protease</keyword>
<keyword id="KW-0862">Zinc</keyword>
<name>YICR_ECO5E</name>
<proteinExistence type="inferred from homology"/>
<comment type="similarity">
    <text evidence="1">Belongs to the UPF0758 family. YicR subfamily.</text>
</comment>
<gene>
    <name evidence="1" type="primary">yicR</name>
    <name type="ordered locus">ECH74115_5008</name>
</gene>
<accession>B5YWD6</accession>
<feature type="chain" id="PRO_1000089814" description="UPF0758 protein YicR">
    <location>
        <begin position="1"/>
        <end position="222"/>
    </location>
</feature>
<feature type="domain" description="MPN" evidence="2">
    <location>
        <begin position="100"/>
        <end position="222"/>
    </location>
</feature>
<feature type="short sequence motif" description="JAMM motif" evidence="2">
    <location>
        <begin position="171"/>
        <end position="184"/>
    </location>
</feature>
<feature type="binding site" evidence="2">
    <location>
        <position position="171"/>
    </location>
    <ligand>
        <name>Zn(2+)</name>
        <dbReference type="ChEBI" id="CHEBI:29105"/>
        <note>catalytic</note>
    </ligand>
</feature>
<feature type="binding site" evidence="2">
    <location>
        <position position="173"/>
    </location>
    <ligand>
        <name>Zn(2+)</name>
        <dbReference type="ChEBI" id="CHEBI:29105"/>
        <note>catalytic</note>
    </ligand>
</feature>
<feature type="binding site" evidence="2">
    <location>
        <position position="184"/>
    </location>
    <ligand>
        <name>Zn(2+)</name>
        <dbReference type="ChEBI" id="CHEBI:29105"/>
        <note>catalytic</note>
    </ligand>
</feature>
<reference key="1">
    <citation type="journal article" date="2011" name="Proc. Natl. Acad. Sci. U.S.A.">
        <title>Genomic anatomy of Escherichia coli O157:H7 outbreaks.</title>
        <authorList>
            <person name="Eppinger M."/>
            <person name="Mammel M.K."/>
            <person name="Leclerc J.E."/>
            <person name="Ravel J."/>
            <person name="Cebula T.A."/>
        </authorList>
    </citation>
    <scope>NUCLEOTIDE SEQUENCE [LARGE SCALE GENOMIC DNA]</scope>
    <source>
        <strain>EC4115 / EHEC</strain>
    </source>
</reference>
<dbReference type="EMBL" id="CP001164">
    <property type="protein sequence ID" value="ACI38215.1"/>
    <property type="molecule type" value="Genomic_DNA"/>
</dbReference>
<dbReference type="SMR" id="B5YWD6"/>
<dbReference type="KEGG" id="ecf:ECH74115_5008"/>
<dbReference type="HOGENOM" id="CLU_073529_0_1_6"/>
<dbReference type="GO" id="GO:0046872">
    <property type="term" value="F:metal ion binding"/>
    <property type="evidence" value="ECO:0007669"/>
    <property type="project" value="UniProtKB-KW"/>
</dbReference>
<dbReference type="GO" id="GO:0008237">
    <property type="term" value="F:metallopeptidase activity"/>
    <property type="evidence" value="ECO:0007669"/>
    <property type="project" value="UniProtKB-KW"/>
</dbReference>
<dbReference type="GO" id="GO:0006508">
    <property type="term" value="P:proteolysis"/>
    <property type="evidence" value="ECO:0007669"/>
    <property type="project" value="UniProtKB-KW"/>
</dbReference>
<dbReference type="CDD" id="cd08071">
    <property type="entry name" value="MPN_DUF2466"/>
    <property type="match status" value="1"/>
</dbReference>
<dbReference type="Gene3D" id="3.40.140.10">
    <property type="entry name" value="Cytidine Deaminase, domain 2"/>
    <property type="match status" value="1"/>
</dbReference>
<dbReference type="HAMAP" id="MF_00018">
    <property type="entry name" value="UPF0758_YicR"/>
    <property type="match status" value="1"/>
</dbReference>
<dbReference type="InterPro" id="IPR037518">
    <property type="entry name" value="MPN"/>
</dbReference>
<dbReference type="InterPro" id="IPR025657">
    <property type="entry name" value="RadC_JAB"/>
</dbReference>
<dbReference type="InterPro" id="IPR010994">
    <property type="entry name" value="RuvA_2-like"/>
</dbReference>
<dbReference type="InterPro" id="IPR001405">
    <property type="entry name" value="UPF0758"/>
</dbReference>
<dbReference type="InterPro" id="IPR020891">
    <property type="entry name" value="UPF0758_CS"/>
</dbReference>
<dbReference type="InterPro" id="IPR046778">
    <property type="entry name" value="UPF0758_N"/>
</dbReference>
<dbReference type="InterPro" id="IPR022820">
    <property type="entry name" value="UPF0758_YicR"/>
</dbReference>
<dbReference type="NCBIfam" id="NF000642">
    <property type="entry name" value="PRK00024.1"/>
    <property type="match status" value="1"/>
</dbReference>
<dbReference type="NCBIfam" id="TIGR00608">
    <property type="entry name" value="radc"/>
    <property type="match status" value="1"/>
</dbReference>
<dbReference type="PANTHER" id="PTHR30471">
    <property type="entry name" value="DNA REPAIR PROTEIN RADC"/>
    <property type="match status" value="1"/>
</dbReference>
<dbReference type="PANTHER" id="PTHR30471:SF3">
    <property type="entry name" value="UPF0758 PROTEIN YEES-RELATED"/>
    <property type="match status" value="1"/>
</dbReference>
<dbReference type="Pfam" id="PF04002">
    <property type="entry name" value="RadC"/>
    <property type="match status" value="1"/>
</dbReference>
<dbReference type="Pfam" id="PF20582">
    <property type="entry name" value="UPF0758_N"/>
    <property type="match status" value="1"/>
</dbReference>
<dbReference type="SUPFAM" id="SSF47781">
    <property type="entry name" value="RuvA domain 2-like"/>
    <property type="match status" value="1"/>
</dbReference>
<dbReference type="PROSITE" id="PS50249">
    <property type="entry name" value="MPN"/>
    <property type="match status" value="1"/>
</dbReference>
<dbReference type="PROSITE" id="PS01302">
    <property type="entry name" value="UPF0758"/>
    <property type="match status" value="1"/>
</dbReference>
<sequence>MKNNAQLLMPREKMLKFGISALTDVELLALFLRTGTRGKDVLTLAKEMLENFGSLYGLLTSEYEQFSGVHGIGVAKFAQLKGIAELARRYYNVRMREESPLLSPEMTREFLQSQLTGEEREIFMVIFLDSQHRVITHSRLFSGTLNHVEVHPREIIREAIKINASALILAHNHPSGCAEPSKADKLITERIIKSCQFMDLRVLDHIVIGRGEYVSFAERGWI</sequence>
<organism>
    <name type="scientific">Escherichia coli O157:H7 (strain EC4115 / EHEC)</name>
    <dbReference type="NCBI Taxonomy" id="444450"/>
    <lineage>
        <taxon>Bacteria</taxon>
        <taxon>Pseudomonadati</taxon>
        <taxon>Pseudomonadota</taxon>
        <taxon>Gammaproteobacteria</taxon>
        <taxon>Enterobacterales</taxon>
        <taxon>Enterobacteriaceae</taxon>
        <taxon>Escherichia</taxon>
    </lineage>
</organism>